<dbReference type="EC" id="6.1.1.19" evidence="1"/>
<dbReference type="EMBL" id="CP000412">
    <property type="protein sequence ID" value="ABJ58354.1"/>
    <property type="molecule type" value="Genomic_DNA"/>
</dbReference>
<dbReference type="RefSeq" id="WP_003619765.1">
    <property type="nucleotide sequence ID" value="NC_008529.1"/>
</dbReference>
<dbReference type="SMR" id="Q04B18"/>
<dbReference type="KEGG" id="lbu:LBUL_0739"/>
<dbReference type="HOGENOM" id="CLU_006406_6_1_9"/>
<dbReference type="BioCyc" id="LDEL321956:LBUL_RS03520-MONOMER"/>
<dbReference type="GO" id="GO:0005737">
    <property type="term" value="C:cytoplasm"/>
    <property type="evidence" value="ECO:0007669"/>
    <property type="project" value="UniProtKB-SubCell"/>
</dbReference>
<dbReference type="GO" id="GO:0004814">
    <property type="term" value="F:arginine-tRNA ligase activity"/>
    <property type="evidence" value="ECO:0007669"/>
    <property type="project" value="UniProtKB-UniRule"/>
</dbReference>
<dbReference type="GO" id="GO:0005524">
    <property type="term" value="F:ATP binding"/>
    <property type="evidence" value="ECO:0007669"/>
    <property type="project" value="UniProtKB-UniRule"/>
</dbReference>
<dbReference type="GO" id="GO:0006420">
    <property type="term" value="P:arginyl-tRNA aminoacylation"/>
    <property type="evidence" value="ECO:0007669"/>
    <property type="project" value="UniProtKB-UniRule"/>
</dbReference>
<dbReference type="CDD" id="cd07956">
    <property type="entry name" value="Anticodon_Ia_Arg"/>
    <property type="match status" value="1"/>
</dbReference>
<dbReference type="CDD" id="cd00671">
    <property type="entry name" value="ArgRS_core"/>
    <property type="match status" value="1"/>
</dbReference>
<dbReference type="FunFam" id="3.40.50.620:FF:000116">
    <property type="entry name" value="Arginine--tRNA ligase"/>
    <property type="match status" value="1"/>
</dbReference>
<dbReference type="Gene3D" id="3.30.1360.70">
    <property type="entry name" value="Arginyl tRNA synthetase N-terminal domain"/>
    <property type="match status" value="1"/>
</dbReference>
<dbReference type="Gene3D" id="3.40.50.620">
    <property type="entry name" value="HUPs"/>
    <property type="match status" value="1"/>
</dbReference>
<dbReference type="Gene3D" id="1.10.730.10">
    <property type="entry name" value="Isoleucyl-tRNA Synthetase, Domain 1"/>
    <property type="match status" value="1"/>
</dbReference>
<dbReference type="HAMAP" id="MF_00123">
    <property type="entry name" value="Arg_tRNA_synth"/>
    <property type="match status" value="1"/>
</dbReference>
<dbReference type="InterPro" id="IPR001278">
    <property type="entry name" value="Arg-tRNA-ligase"/>
</dbReference>
<dbReference type="InterPro" id="IPR005148">
    <property type="entry name" value="Arg-tRNA-synth_N"/>
</dbReference>
<dbReference type="InterPro" id="IPR036695">
    <property type="entry name" value="Arg-tRNA-synth_N_sf"/>
</dbReference>
<dbReference type="InterPro" id="IPR035684">
    <property type="entry name" value="ArgRS_core"/>
</dbReference>
<dbReference type="InterPro" id="IPR008909">
    <property type="entry name" value="DALR_anticod-bd"/>
</dbReference>
<dbReference type="InterPro" id="IPR014729">
    <property type="entry name" value="Rossmann-like_a/b/a_fold"/>
</dbReference>
<dbReference type="InterPro" id="IPR009080">
    <property type="entry name" value="tRNAsynth_Ia_anticodon-bd"/>
</dbReference>
<dbReference type="NCBIfam" id="TIGR00456">
    <property type="entry name" value="argS"/>
    <property type="match status" value="1"/>
</dbReference>
<dbReference type="PANTHER" id="PTHR11956:SF5">
    <property type="entry name" value="ARGININE--TRNA LIGASE, CYTOPLASMIC"/>
    <property type="match status" value="1"/>
</dbReference>
<dbReference type="PANTHER" id="PTHR11956">
    <property type="entry name" value="ARGINYL-TRNA SYNTHETASE"/>
    <property type="match status" value="1"/>
</dbReference>
<dbReference type="Pfam" id="PF03485">
    <property type="entry name" value="Arg_tRNA_synt_N"/>
    <property type="match status" value="1"/>
</dbReference>
<dbReference type="Pfam" id="PF05746">
    <property type="entry name" value="DALR_1"/>
    <property type="match status" value="1"/>
</dbReference>
<dbReference type="Pfam" id="PF00750">
    <property type="entry name" value="tRNA-synt_1d"/>
    <property type="match status" value="1"/>
</dbReference>
<dbReference type="PRINTS" id="PR01038">
    <property type="entry name" value="TRNASYNTHARG"/>
</dbReference>
<dbReference type="SMART" id="SM01016">
    <property type="entry name" value="Arg_tRNA_synt_N"/>
    <property type="match status" value="1"/>
</dbReference>
<dbReference type="SMART" id="SM00836">
    <property type="entry name" value="DALR_1"/>
    <property type="match status" value="1"/>
</dbReference>
<dbReference type="SUPFAM" id="SSF47323">
    <property type="entry name" value="Anticodon-binding domain of a subclass of class I aminoacyl-tRNA synthetases"/>
    <property type="match status" value="1"/>
</dbReference>
<dbReference type="SUPFAM" id="SSF55190">
    <property type="entry name" value="Arginyl-tRNA synthetase (ArgRS), N-terminal 'additional' domain"/>
    <property type="match status" value="1"/>
</dbReference>
<dbReference type="SUPFAM" id="SSF52374">
    <property type="entry name" value="Nucleotidylyl transferase"/>
    <property type="match status" value="1"/>
</dbReference>
<evidence type="ECO:0000255" key="1">
    <source>
        <dbReference type="HAMAP-Rule" id="MF_00123"/>
    </source>
</evidence>
<accession>Q04B18</accession>
<proteinExistence type="inferred from homology"/>
<name>SYR_LACDB</name>
<reference key="1">
    <citation type="journal article" date="2006" name="Proc. Natl. Acad. Sci. U.S.A.">
        <title>Comparative genomics of the lactic acid bacteria.</title>
        <authorList>
            <person name="Makarova K.S."/>
            <person name="Slesarev A."/>
            <person name="Wolf Y.I."/>
            <person name="Sorokin A."/>
            <person name="Mirkin B."/>
            <person name="Koonin E.V."/>
            <person name="Pavlov A."/>
            <person name="Pavlova N."/>
            <person name="Karamychev V."/>
            <person name="Polouchine N."/>
            <person name="Shakhova V."/>
            <person name="Grigoriev I."/>
            <person name="Lou Y."/>
            <person name="Rohksar D."/>
            <person name="Lucas S."/>
            <person name="Huang K."/>
            <person name="Goodstein D.M."/>
            <person name="Hawkins T."/>
            <person name="Plengvidhya V."/>
            <person name="Welker D."/>
            <person name="Hughes J."/>
            <person name="Goh Y."/>
            <person name="Benson A."/>
            <person name="Baldwin K."/>
            <person name="Lee J.-H."/>
            <person name="Diaz-Muniz I."/>
            <person name="Dosti B."/>
            <person name="Smeianov V."/>
            <person name="Wechter W."/>
            <person name="Barabote R."/>
            <person name="Lorca G."/>
            <person name="Altermann E."/>
            <person name="Barrangou R."/>
            <person name="Ganesan B."/>
            <person name="Xie Y."/>
            <person name="Rawsthorne H."/>
            <person name="Tamir D."/>
            <person name="Parker C."/>
            <person name="Breidt F."/>
            <person name="Broadbent J.R."/>
            <person name="Hutkins R."/>
            <person name="O'Sullivan D."/>
            <person name="Steele J."/>
            <person name="Unlu G."/>
            <person name="Saier M.H. Jr."/>
            <person name="Klaenhammer T."/>
            <person name="Richardson P."/>
            <person name="Kozyavkin S."/>
            <person name="Weimer B.C."/>
            <person name="Mills D.A."/>
        </authorList>
    </citation>
    <scope>NUCLEOTIDE SEQUENCE [LARGE SCALE GENOMIC DNA]</scope>
    <source>
        <strain>ATCC BAA-365 / Lb-18</strain>
    </source>
</reference>
<gene>
    <name evidence="1" type="primary">argS</name>
    <name type="ordered locus">LBUL_0739</name>
</gene>
<protein>
    <recommendedName>
        <fullName evidence="1">Arginine--tRNA ligase</fullName>
        <ecNumber evidence="1">6.1.1.19</ecNumber>
    </recommendedName>
    <alternativeName>
        <fullName evidence="1">Arginyl-tRNA synthetase</fullName>
        <shortName evidence="1">ArgRS</shortName>
    </alternativeName>
</protein>
<comment type="catalytic activity">
    <reaction evidence="1">
        <text>tRNA(Arg) + L-arginine + ATP = L-arginyl-tRNA(Arg) + AMP + diphosphate</text>
        <dbReference type="Rhea" id="RHEA:20301"/>
        <dbReference type="Rhea" id="RHEA-COMP:9658"/>
        <dbReference type="Rhea" id="RHEA-COMP:9673"/>
        <dbReference type="ChEBI" id="CHEBI:30616"/>
        <dbReference type="ChEBI" id="CHEBI:32682"/>
        <dbReference type="ChEBI" id="CHEBI:33019"/>
        <dbReference type="ChEBI" id="CHEBI:78442"/>
        <dbReference type="ChEBI" id="CHEBI:78513"/>
        <dbReference type="ChEBI" id="CHEBI:456215"/>
        <dbReference type="EC" id="6.1.1.19"/>
    </reaction>
</comment>
<comment type="subunit">
    <text evidence="1">Monomer.</text>
</comment>
<comment type="subcellular location">
    <subcellularLocation>
        <location evidence="1">Cytoplasm</location>
    </subcellularLocation>
</comment>
<comment type="similarity">
    <text evidence="1">Belongs to the class-I aminoacyl-tRNA synthetase family.</text>
</comment>
<feature type="chain" id="PRO_1000018049" description="Arginine--tRNA ligase">
    <location>
        <begin position="1"/>
        <end position="565"/>
    </location>
</feature>
<feature type="short sequence motif" description="'HIGH' region">
    <location>
        <begin position="121"/>
        <end position="131"/>
    </location>
</feature>
<organism>
    <name type="scientific">Lactobacillus delbrueckii subsp. bulgaricus (strain ATCC BAA-365 / Lb-18)</name>
    <dbReference type="NCBI Taxonomy" id="321956"/>
    <lineage>
        <taxon>Bacteria</taxon>
        <taxon>Bacillati</taxon>
        <taxon>Bacillota</taxon>
        <taxon>Bacilli</taxon>
        <taxon>Lactobacillales</taxon>
        <taxon>Lactobacillaceae</taxon>
        <taxon>Lactobacillus</taxon>
    </lineage>
</organism>
<keyword id="KW-0030">Aminoacyl-tRNA synthetase</keyword>
<keyword id="KW-0067">ATP-binding</keyword>
<keyword id="KW-0963">Cytoplasm</keyword>
<keyword id="KW-0436">Ligase</keyword>
<keyword id="KW-0547">Nucleotide-binding</keyword>
<keyword id="KW-0648">Protein biosynthesis</keyword>
<sequence>MNGKQLVAEALQAVLPDWSLDDIDVKIERPKDEKLGDYAFPTFTLAKTMRKAPNLIAVELAEKIDQGSFEKVEAVGPYINFFLDKSQTGAAILQEILADPENYGARDLGHGRNVLTEYSSPNIAKPMGMGHLRSTMIGEAIARILAKEGFKPIRIDYLGDWGTQFGKMMAAYKMWGNDADIEKDPINTLLSYYVRINREAEEHPEYDEDGREWFSKLEHGDEEAKRLWSWFREVSLERFKKVYDMLDVHFDSFTGEAFSAQMMDKPIQILREKGLLVKSQGAEIVDLEKYNLPPLMVIKSNGTSTYITRDLATAMYRKKTYGFYKSIYVVGQEQEVYFQQLRACLKEMGFDWADDIVHISFGLMSINGQKMSTRKGNVVNLEDVLNESVDLARKQISEKNAGLKNADEVAKQVGIGAVVFHDLKNYRRNPIDFNLEEVVKFEGETGPYVQYARARGESLLRKSGITDFSDADLTKIGAEEWDLVSFMARYADTIQKAMETYDPSAIAKYALELAKRFNKYYAHTRILVDDVDEDVKKARLAVVQAVSHVIKSALDLLDVKAPDEM</sequence>